<dbReference type="EC" id="3.2.2.27" evidence="1"/>
<dbReference type="EMBL" id="CP001011">
    <property type="protein sequence ID" value="ACB93548.1"/>
    <property type="molecule type" value="Genomic_DNA"/>
</dbReference>
<dbReference type="RefSeq" id="WP_004087510.1">
    <property type="nucleotide sequence ID" value="NC_010577.1"/>
</dbReference>
<dbReference type="SMR" id="B2IAB2"/>
<dbReference type="GeneID" id="93905911"/>
<dbReference type="KEGG" id="xfn:XfasM23_2152"/>
<dbReference type="HOGENOM" id="CLU_032162_3_0_6"/>
<dbReference type="Proteomes" id="UP000001698">
    <property type="component" value="Chromosome"/>
</dbReference>
<dbReference type="GO" id="GO:0005737">
    <property type="term" value="C:cytoplasm"/>
    <property type="evidence" value="ECO:0007669"/>
    <property type="project" value="UniProtKB-SubCell"/>
</dbReference>
<dbReference type="GO" id="GO:0004844">
    <property type="term" value="F:uracil DNA N-glycosylase activity"/>
    <property type="evidence" value="ECO:0007669"/>
    <property type="project" value="UniProtKB-UniRule"/>
</dbReference>
<dbReference type="GO" id="GO:0097510">
    <property type="term" value="P:base-excision repair, AP site formation via deaminated base removal"/>
    <property type="evidence" value="ECO:0007669"/>
    <property type="project" value="TreeGrafter"/>
</dbReference>
<dbReference type="CDD" id="cd10027">
    <property type="entry name" value="UDG-F1-like"/>
    <property type="match status" value="1"/>
</dbReference>
<dbReference type="FunFam" id="3.40.470.10:FF:000001">
    <property type="entry name" value="Uracil-DNA glycosylase"/>
    <property type="match status" value="1"/>
</dbReference>
<dbReference type="Gene3D" id="3.40.470.10">
    <property type="entry name" value="Uracil-DNA glycosylase-like domain"/>
    <property type="match status" value="1"/>
</dbReference>
<dbReference type="HAMAP" id="MF_00148">
    <property type="entry name" value="UDG"/>
    <property type="match status" value="1"/>
</dbReference>
<dbReference type="InterPro" id="IPR002043">
    <property type="entry name" value="UDG_fam1"/>
</dbReference>
<dbReference type="InterPro" id="IPR018085">
    <property type="entry name" value="Ura-DNA_Glyclase_AS"/>
</dbReference>
<dbReference type="InterPro" id="IPR005122">
    <property type="entry name" value="Uracil-DNA_glycosylase-like"/>
</dbReference>
<dbReference type="InterPro" id="IPR036895">
    <property type="entry name" value="Uracil-DNA_glycosylase-like_sf"/>
</dbReference>
<dbReference type="NCBIfam" id="NF003588">
    <property type="entry name" value="PRK05254.1-1"/>
    <property type="match status" value="1"/>
</dbReference>
<dbReference type="NCBIfam" id="NF003589">
    <property type="entry name" value="PRK05254.1-2"/>
    <property type="match status" value="1"/>
</dbReference>
<dbReference type="NCBIfam" id="NF003591">
    <property type="entry name" value="PRK05254.1-4"/>
    <property type="match status" value="1"/>
</dbReference>
<dbReference type="NCBIfam" id="NF003592">
    <property type="entry name" value="PRK05254.1-5"/>
    <property type="match status" value="1"/>
</dbReference>
<dbReference type="NCBIfam" id="TIGR00628">
    <property type="entry name" value="ung"/>
    <property type="match status" value="1"/>
</dbReference>
<dbReference type="PANTHER" id="PTHR11264">
    <property type="entry name" value="URACIL-DNA GLYCOSYLASE"/>
    <property type="match status" value="1"/>
</dbReference>
<dbReference type="PANTHER" id="PTHR11264:SF0">
    <property type="entry name" value="URACIL-DNA GLYCOSYLASE"/>
    <property type="match status" value="1"/>
</dbReference>
<dbReference type="Pfam" id="PF03167">
    <property type="entry name" value="UDG"/>
    <property type="match status" value="1"/>
</dbReference>
<dbReference type="SMART" id="SM00986">
    <property type="entry name" value="UDG"/>
    <property type="match status" value="1"/>
</dbReference>
<dbReference type="SMART" id="SM00987">
    <property type="entry name" value="UreE_C"/>
    <property type="match status" value="1"/>
</dbReference>
<dbReference type="SUPFAM" id="SSF52141">
    <property type="entry name" value="Uracil-DNA glycosylase-like"/>
    <property type="match status" value="1"/>
</dbReference>
<dbReference type="PROSITE" id="PS00130">
    <property type="entry name" value="U_DNA_GLYCOSYLASE"/>
    <property type="match status" value="1"/>
</dbReference>
<organism>
    <name type="scientific">Xylella fastidiosa (strain M23)</name>
    <dbReference type="NCBI Taxonomy" id="405441"/>
    <lineage>
        <taxon>Bacteria</taxon>
        <taxon>Pseudomonadati</taxon>
        <taxon>Pseudomonadota</taxon>
        <taxon>Gammaproteobacteria</taxon>
        <taxon>Lysobacterales</taxon>
        <taxon>Lysobacteraceae</taxon>
        <taxon>Xylella</taxon>
    </lineage>
</organism>
<protein>
    <recommendedName>
        <fullName evidence="1">Uracil-DNA glycosylase</fullName>
        <shortName evidence="1">UDG</shortName>
        <ecNumber evidence="1">3.2.2.27</ecNumber>
    </recommendedName>
</protein>
<keyword id="KW-0963">Cytoplasm</keyword>
<keyword id="KW-0227">DNA damage</keyword>
<keyword id="KW-0234">DNA repair</keyword>
<keyword id="KW-0378">Hydrolase</keyword>
<evidence type="ECO:0000255" key="1">
    <source>
        <dbReference type="HAMAP-Rule" id="MF_00148"/>
    </source>
</evidence>
<proteinExistence type="inferred from homology"/>
<accession>B2IAB2</accession>
<feature type="chain" id="PRO_1000096617" description="Uracil-DNA glycosylase">
    <location>
        <begin position="1"/>
        <end position="253"/>
    </location>
</feature>
<feature type="active site" description="Proton acceptor" evidence="1">
    <location>
        <position position="79"/>
    </location>
</feature>
<reference key="1">
    <citation type="journal article" date="2010" name="J. Bacteriol.">
        <title>Whole genome sequences of two Xylella fastidiosa strains (M12 and M23) causing almond leaf scorch disease in California.</title>
        <authorList>
            <person name="Chen J."/>
            <person name="Xie G."/>
            <person name="Han S."/>
            <person name="Chertkov O."/>
            <person name="Sims D."/>
            <person name="Civerolo E.L."/>
        </authorList>
    </citation>
    <scope>NUCLEOTIDE SEQUENCE [LARGE SCALE GENOMIC DNA]</scope>
    <source>
        <strain>M23</strain>
    </source>
</reference>
<gene>
    <name evidence="1" type="primary">ung</name>
    <name type="ordered locus">XfasM23_2152</name>
</gene>
<name>UNG_XYLF2</name>
<comment type="function">
    <text evidence="1">Excises uracil residues from the DNA which can arise as a result of misincorporation of dUMP residues by DNA polymerase or due to deamination of cytosine.</text>
</comment>
<comment type="catalytic activity">
    <reaction evidence="1">
        <text>Hydrolyzes single-stranded DNA or mismatched double-stranded DNA and polynucleotides, releasing free uracil.</text>
        <dbReference type="EC" id="3.2.2.27"/>
    </reaction>
</comment>
<comment type="subcellular location">
    <subcellularLocation>
        <location evidence="1">Cytoplasm</location>
    </subcellularLocation>
</comment>
<comment type="similarity">
    <text evidence="1">Belongs to the uracil-DNA glycosylase (UDG) superfamily. UNG family.</text>
</comment>
<sequence length="253" mass="27841">MNEQGKAINSSAESRIQLESSWKAHVGNWLLRPEMRDLSSFLRARKVAGVSVYPPGSQIFAAFEATPFQRVKAVILGQDPYHGQGQAHGLCFSVRPGMPLPPSLLNIYKELEEDLGLLRPDHGCLLPWAKRGVLLLNAVLTVEDGRAGAHQGKGWEGFTDHVVDTLNREREGLVFMLWGSYAQAKGKAIDTRRHLVLKAPHPSPLSAHRGFLGCRHFSLCNQYLSQHGLGMVDWSLPPCIALDGAILNGRIAV</sequence>